<proteinExistence type="evidence at transcript level"/>
<name>CPXR_KLEPH</name>
<reference evidence="11" key="1">
    <citation type="journal article" date="2012" name="J. Bacteriol.">
        <title>Complete genome sequence of Klebsiella pneumoniae subsp. pneumoniae HS11286, a multidrug-resistant strain isolated from human sputum.</title>
        <authorList>
            <person name="Liu P."/>
            <person name="Li P."/>
            <person name="Jiang X."/>
            <person name="Bi D."/>
            <person name="Xie Y."/>
            <person name="Tai C."/>
            <person name="Deng Z."/>
            <person name="Rajakumar K."/>
            <person name="Ou H.Y."/>
        </authorList>
    </citation>
    <scope>NUCLEOTIDE SEQUENCE [LARGE SCALE GENOMIC DNA]</scope>
    <source>
        <strain evidence="11">HS11286</strain>
    </source>
</reference>
<reference evidence="8" key="2">
    <citation type="journal article" date="2012" name="PLoS ONE">
        <title>Role of the two component signal transduction system CpxAR in conferring cefepime and chloramphenicol resistance in Klebsiella pneumoniae NTUH-K2044.</title>
        <authorList>
            <person name="Srinivasan V.B."/>
            <person name="Vaidyanathan V."/>
            <person name="Mondal A."/>
            <person name="Rajamohan G."/>
        </authorList>
    </citation>
    <scope>FUNCTION</scope>
    <scope>INDUCTION</scope>
    <scope>DISRUPTION PHENOTYPE</scope>
    <source>
        <strain evidence="8">NTUH-K2044</strain>
    </source>
</reference>
<reference evidence="8" key="3">
    <citation type="journal article" date="2015" name="Microbiology">
        <title>PecS regulates the urate-responsive expression of type 1 fimbriae in Klebsiella pneumoniae CG43.</title>
        <authorList>
            <person name="Wang Z.C."/>
            <person name="Liu C.J."/>
            <person name="Huang Y.J."/>
            <person name="Wang Y.S."/>
            <person name="Peng H.L."/>
        </authorList>
    </citation>
    <scope>FUNCTION</scope>
    <scope>DISRUPTION PHENOTYPE</scope>
    <source>
        <strain evidence="8">CG43</strain>
    </source>
</reference>
<reference evidence="8" key="4">
    <citation type="journal article" date="2023" name="J. Microbiol. Immunol. Infect.">
        <title>Role of the stress-responsive two-component system CpxAR in regulating fimbriae expression in Klebsiella pneumoniae CG43.</title>
        <authorList>
            <person name="Kuo C.H."/>
            <person name="Lin W.F."/>
            <person name="Liu C.J."/>
            <person name="Wang Z.C."/>
            <person name="Liu T.Y."/>
            <person name="Peng H.L."/>
        </authorList>
    </citation>
    <scope>FUNCTION</scope>
    <scope>DISRUPTION PHENOTYPE</scope>
    <source>
        <strain evidence="8">CG43</strain>
    </source>
</reference>
<sequence>MNKILLVDDDRELTSLLKELLDMEGFNVLVAHDGEQALALLDDSVDLLLLDVMMPKKNGIDTLKELRQTHQTPVIMLTARGSELDRVLGLELGADDYLPKPFNDRELVARIRAILRRSHWSEQQQTTEAGSPTLEVDALSLNPGRQEANFDGQTLELTGTEFTLLYLLAQHLGQVVSREHLSQEVLGKRLTPFDRAIDMHISNLRRKLPERKDGHPWFKTLRGRGYLMVSAS</sequence>
<evidence type="ECO:0000250" key="1">
    <source>
        <dbReference type="UniProtKB" id="P0AE88"/>
    </source>
</evidence>
<evidence type="ECO:0000255" key="2">
    <source>
        <dbReference type="PROSITE-ProRule" id="PRU00169"/>
    </source>
</evidence>
<evidence type="ECO:0000255" key="3">
    <source>
        <dbReference type="PROSITE-ProRule" id="PRU01091"/>
    </source>
</evidence>
<evidence type="ECO:0000269" key="4">
    <source>
    </source>
</evidence>
<evidence type="ECO:0000269" key="5">
    <source>
    </source>
</evidence>
<evidence type="ECO:0000269" key="6">
    <source>
    </source>
</evidence>
<evidence type="ECO:0000303" key="7">
    <source>
    </source>
</evidence>
<evidence type="ECO:0000305" key="8"/>
<evidence type="ECO:0000305" key="9">
    <source>
    </source>
</evidence>
<evidence type="ECO:0000312" key="10">
    <source>
        <dbReference type="EMBL" id="AEW58770.1"/>
    </source>
</evidence>
<evidence type="ECO:0000312" key="11">
    <source>
        <dbReference type="Proteomes" id="UP000007841"/>
    </source>
</evidence>
<protein>
    <recommendedName>
        <fullName evidence="9">Transcriptional regulatory protein CpxR</fullName>
    </recommendedName>
    <alternativeName>
        <fullName evidence="7">Response regulator CpxR</fullName>
    </alternativeName>
</protein>
<keyword id="KW-0010">Activator</keyword>
<keyword id="KW-0130">Cell adhesion</keyword>
<keyword id="KW-0963">Cytoplasm</keyword>
<keyword id="KW-0238">DNA-binding</keyword>
<keyword id="KW-0597">Phosphoprotein</keyword>
<keyword id="KW-1185">Reference proteome</keyword>
<keyword id="KW-0346">Stress response</keyword>
<keyword id="KW-0804">Transcription</keyword>
<keyword id="KW-0805">Transcription regulation</keyword>
<keyword id="KW-0902">Two-component regulatory system</keyword>
<accession>A0A0H3GGB5</accession>
<organism evidence="11">
    <name type="scientific">Klebsiella pneumoniae subsp. pneumoniae (strain HS11286)</name>
    <dbReference type="NCBI Taxonomy" id="1125630"/>
    <lineage>
        <taxon>Bacteria</taxon>
        <taxon>Pseudomonadati</taxon>
        <taxon>Pseudomonadota</taxon>
        <taxon>Gammaproteobacteria</taxon>
        <taxon>Enterobacterales</taxon>
        <taxon>Enterobacteriaceae</taxon>
        <taxon>Klebsiella/Raoultella group</taxon>
        <taxon>Klebsiella</taxon>
        <taxon>Klebsiella pneumoniae complex</taxon>
    </lineage>
</organism>
<feature type="chain" id="PRO_0000459747" description="Transcriptional regulatory protein CpxR">
    <location>
        <begin position="1"/>
        <end position="232"/>
    </location>
</feature>
<feature type="domain" description="Response regulatory" evidence="2">
    <location>
        <begin position="3"/>
        <end position="115"/>
    </location>
</feature>
<feature type="DNA-binding region" description="OmpR/PhoB-type" evidence="3">
    <location>
        <begin position="131"/>
        <end position="230"/>
    </location>
</feature>
<feature type="modified residue" description="4-aspartylphosphate" evidence="2">
    <location>
        <position position="51"/>
    </location>
</feature>
<comment type="function">
    <text evidence="4 5 6">Response regulator member of the two-component regulatory system CpxA/CpxR which responds to envelope stress response by activating or, in some cases, repressing expression of downstream genes (PubMed:22496764, PubMed:36898943). Binds to the promoter regions of various genes in vitro, including ompC, cpxP, ryhB and mrkA and, when CpxR is phosphorylated, pecO (PubMed:22496764, PubMed:26385366, PubMed:36898943). Represses expression of the major pilin of type 3 fimbriae MrkA as well as that of type 1 fimbriae FimA (PubMed:36898943). Repression of expression of MrkA appears to be indirect, mediated by activation of the iron homeostasis regulator RyhB (PubMed:36898943).</text>
</comment>
<comment type="activity regulation">
    <text evidence="1">The two-component system is activated by envelope stress such as overexpression of some (misfolded) periplasmic proteins.</text>
</comment>
<comment type="subunit">
    <text evidence="1">Interacts with cognate sensor kinase CpxA.</text>
</comment>
<comment type="subcellular location">
    <subcellularLocation>
        <location evidence="9">Cytoplasm</location>
    </subcellularLocation>
</comment>
<comment type="induction">
    <text evidence="4">Part of the putative cpxR-cpxA operon.</text>
</comment>
<comment type="PTM">
    <text evidence="1">Phosphorylated by CpxA.</text>
</comment>
<comment type="disruption phenotype">
    <text evidence="4 5 6">Deletion of cpxR in the CG43 strain significantly decreases expression of cpxA and cpxP (PubMed:36898943). Increases mrkA and mrkH transcript levels (PubMed:36898943). A double cpxR-cpxA mutant in the CG43 strain activates expression of pecS and pecM (PubMed:26385366). Increases production of the major pilin of type 3 fimbriae MrkA as well as that of type 1 fimbriae FimA (PubMed:26385366, PubMed:36898943). Increases mannose-sensitive yeast agglutination activity and reduces biofilm formation in the CG43 strain (PubMed:26385366, PubMed:36898943). Increases promoter activities of fimA, fimB and mrkA, decreases ryhB and cpxP, but has no effect on fur (PubMed:36898943). No apparent change in susceptibility of the CG43 strain to 500 mM paraquat or 10 mM hydrogen peroxide, by comparison with wild type (PubMed:26385366). A double cpxR-cpxA mutant in the NTUH-K2044 strain causes growth of smaller colonies, but no significant difference in cell size, compared to wild type (PubMed:22496764). No difference in the production of exopolysaccharide (PubMed:22496764). Reduces growth in response to oxidative stress, osmotic or bile stressors (PubMed:22496764). Significantly reduces expression of the resistance-nodulation-cell division (RND) efflux pump genes, including acrB, acrD and eefB (PubMed:22496764). Significantly increases sensitivity to beta-lactam antibiotics, by comparison with wild type (PubMed:22496764). Halves survival rate upon exposure to the disinfectant, chlorhexidine (PubMed:22496764).</text>
</comment>
<gene>
    <name evidence="7" type="primary">cpxR</name>
    <name evidence="10" type="ordered locus">KPHS_00720</name>
</gene>
<dbReference type="EMBL" id="CP003200">
    <property type="protein sequence ID" value="AEW58770.1"/>
    <property type="molecule type" value="Genomic_DNA"/>
</dbReference>
<dbReference type="RefSeq" id="WP_002882901.1">
    <property type="nucleotide sequence ID" value="NC_016845.1"/>
</dbReference>
<dbReference type="RefSeq" id="YP_005224372.1">
    <property type="nucleotide sequence ID" value="NC_016845.1"/>
</dbReference>
<dbReference type="SMR" id="A0A0H3GGB5"/>
<dbReference type="STRING" id="1125630.KPHS_00720"/>
<dbReference type="GeneID" id="11845050"/>
<dbReference type="GeneID" id="93275771"/>
<dbReference type="KEGG" id="kpm:KPHS_00720"/>
<dbReference type="PATRIC" id="fig|1125630.4.peg.72"/>
<dbReference type="HOGENOM" id="CLU_000445_30_4_6"/>
<dbReference type="Proteomes" id="UP000007841">
    <property type="component" value="Chromosome"/>
</dbReference>
<dbReference type="GO" id="GO:0005829">
    <property type="term" value="C:cytosol"/>
    <property type="evidence" value="ECO:0007669"/>
    <property type="project" value="TreeGrafter"/>
</dbReference>
<dbReference type="GO" id="GO:0032993">
    <property type="term" value="C:protein-DNA complex"/>
    <property type="evidence" value="ECO:0007669"/>
    <property type="project" value="TreeGrafter"/>
</dbReference>
<dbReference type="GO" id="GO:0000156">
    <property type="term" value="F:phosphorelay response regulator activity"/>
    <property type="evidence" value="ECO:0007669"/>
    <property type="project" value="TreeGrafter"/>
</dbReference>
<dbReference type="GO" id="GO:0000976">
    <property type="term" value="F:transcription cis-regulatory region binding"/>
    <property type="evidence" value="ECO:0007669"/>
    <property type="project" value="TreeGrafter"/>
</dbReference>
<dbReference type="GO" id="GO:0007155">
    <property type="term" value="P:cell adhesion"/>
    <property type="evidence" value="ECO:0007669"/>
    <property type="project" value="UniProtKB-KW"/>
</dbReference>
<dbReference type="GO" id="GO:0006355">
    <property type="term" value="P:regulation of DNA-templated transcription"/>
    <property type="evidence" value="ECO:0007669"/>
    <property type="project" value="InterPro"/>
</dbReference>
<dbReference type="CDD" id="cd17623">
    <property type="entry name" value="REC_OmpR_CpxR"/>
    <property type="match status" value="1"/>
</dbReference>
<dbReference type="CDD" id="cd00383">
    <property type="entry name" value="trans_reg_C"/>
    <property type="match status" value="1"/>
</dbReference>
<dbReference type="FunFam" id="1.10.10.10:FF:000077">
    <property type="entry name" value="DNA-binding transcriptional regulator CpxR"/>
    <property type="match status" value="1"/>
</dbReference>
<dbReference type="FunFam" id="3.40.50.2300:FF:000032">
    <property type="entry name" value="DNA-binding transcriptional regulator CpxR"/>
    <property type="match status" value="1"/>
</dbReference>
<dbReference type="Gene3D" id="3.40.50.2300">
    <property type="match status" value="1"/>
</dbReference>
<dbReference type="Gene3D" id="6.10.250.690">
    <property type="match status" value="1"/>
</dbReference>
<dbReference type="Gene3D" id="1.10.10.10">
    <property type="entry name" value="Winged helix-like DNA-binding domain superfamily/Winged helix DNA-binding domain"/>
    <property type="match status" value="1"/>
</dbReference>
<dbReference type="InterPro" id="IPR011006">
    <property type="entry name" value="CheY-like_superfamily"/>
</dbReference>
<dbReference type="InterPro" id="IPR001867">
    <property type="entry name" value="OmpR/PhoB-type_DNA-bd"/>
</dbReference>
<dbReference type="InterPro" id="IPR001789">
    <property type="entry name" value="Sig_transdc_resp-reg_receiver"/>
</dbReference>
<dbReference type="InterPro" id="IPR039420">
    <property type="entry name" value="WalR-like"/>
</dbReference>
<dbReference type="InterPro" id="IPR036388">
    <property type="entry name" value="WH-like_DNA-bd_sf"/>
</dbReference>
<dbReference type="NCBIfam" id="NF008199">
    <property type="entry name" value="PRK10955.1"/>
    <property type="match status" value="1"/>
</dbReference>
<dbReference type="PANTHER" id="PTHR48111">
    <property type="entry name" value="REGULATOR OF RPOS"/>
    <property type="match status" value="1"/>
</dbReference>
<dbReference type="PANTHER" id="PTHR48111:SF39">
    <property type="entry name" value="TRANSCRIPTIONAL REGULATORY PROTEIN CPXR"/>
    <property type="match status" value="1"/>
</dbReference>
<dbReference type="Pfam" id="PF00072">
    <property type="entry name" value="Response_reg"/>
    <property type="match status" value="1"/>
</dbReference>
<dbReference type="Pfam" id="PF00486">
    <property type="entry name" value="Trans_reg_C"/>
    <property type="match status" value="1"/>
</dbReference>
<dbReference type="SMART" id="SM00448">
    <property type="entry name" value="REC"/>
    <property type="match status" value="1"/>
</dbReference>
<dbReference type="SMART" id="SM00862">
    <property type="entry name" value="Trans_reg_C"/>
    <property type="match status" value="1"/>
</dbReference>
<dbReference type="SUPFAM" id="SSF52172">
    <property type="entry name" value="CheY-like"/>
    <property type="match status" value="1"/>
</dbReference>
<dbReference type="PROSITE" id="PS51755">
    <property type="entry name" value="OMPR_PHOB"/>
    <property type="match status" value="1"/>
</dbReference>
<dbReference type="PROSITE" id="PS50110">
    <property type="entry name" value="RESPONSE_REGULATORY"/>
    <property type="match status" value="1"/>
</dbReference>